<feature type="signal peptide" evidence="2">
    <location>
        <begin position="1"/>
        <end position="25"/>
    </location>
</feature>
<feature type="chain" id="PRO_0000011611" description="Glutamate receptor 3.7">
    <location>
        <begin position="26"/>
        <end position="921"/>
    </location>
</feature>
<feature type="topological domain" description="Extracellular" evidence="2">
    <location>
        <begin position="26"/>
        <end position="580"/>
    </location>
</feature>
<feature type="transmembrane region" description="Helical" evidence="2">
    <location>
        <begin position="581"/>
        <end position="601"/>
    </location>
</feature>
<feature type="topological domain" description="Cytoplasmic" evidence="2">
    <location>
        <begin position="602"/>
        <end position="608"/>
    </location>
</feature>
<feature type="transmembrane region" description="Helical" evidence="2">
    <location>
        <begin position="609"/>
        <end position="629"/>
    </location>
</feature>
<feature type="topological domain" description="Cytoplasmic" evidence="2">
    <location>
        <begin position="630"/>
        <end position="640"/>
    </location>
</feature>
<feature type="transmembrane region" description="Helical" evidence="2">
    <location>
        <begin position="641"/>
        <end position="661"/>
    </location>
</feature>
<feature type="topological domain" description="Extracellular" evidence="2">
    <location>
        <begin position="662"/>
        <end position="822"/>
    </location>
</feature>
<feature type="transmembrane region" description="Helical" evidence="2">
    <location>
        <begin position="823"/>
        <end position="843"/>
    </location>
</feature>
<feature type="topological domain" description="Cytoplasmic" evidence="2">
    <location>
        <begin position="844"/>
        <end position="921"/>
    </location>
</feature>
<feature type="region of interest" description="Disordered" evidence="3">
    <location>
        <begin position="896"/>
        <end position="921"/>
    </location>
</feature>
<feature type="glycosylation site" description="N-linked (GlcNAc...) asparagine" evidence="2">
    <location>
        <position position="214"/>
    </location>
</feature>
<feature type="glycosylation site" description="N-linked (GlcNAc...) asparagine" evidence="2">
    <location>
        <position position="300"/>
    </location>
</feature>
<feature type="glycosylation site" description="N-linked (GlcNAc...) asparagine" evidence="2">
    <location>
        <position position="330"/>
    </location>
</feature>
<feature type="glycosylation site" description="N-linked (GlcNAc...) asparagine" evidence="2">
    <location>
        <position position="369"/>
    </location>
</feature>
<feature type="glycosylation site" description="N-linked (GlcNAc...) asparagine" evidence="2">
    <location>
        <position position="396"/>
    </location>
</feature>
<feature type="glycosylation site" description="N-linked (GlcNAc...) asparagine" evidence="2">
    <location>
        <position position="478"/>
    </location>
</feature>
<feature type="glycosylation site" description="N-linked (GlcNAc...) asparagine" evidence="2">
    <location>
        <position position="568"/>
    </location>
</feature>
<feature type="sequence conflict" description="In Ref. 1; AAF21042." evidence="5" ref="1">
    <original>V</original>
    <variation>I</variation>
    <location>
        <position position="385"/>
    </location>
</feature>
<feature type="sequence conflict" description="In Ref. 1; AAF21042." evidence="5" ref="1">
    <original>F</original>
    <variation>V</variation>
    <location>
        <position position="694"/>
    </location>
</feature>
<feature type="sequence conflict" description="In Ref. 1; AAF21042." evidence="5" ref="1">
    <original>T</original>
    <variation>I</variation>
    <location>
        <position position="858"/>
    </location>
</feature>
<dbReference type="EMBL" id="AF210701">
    <property type="protein sequence ID" value="AAF21042.1"/>
    <property type="molecule type" value="mRNA"/>
</dbReference>
<dbReference type="EMBL" id="AC005700">
    <property type="protein sequence ID" value="AAC69938.2"/>
    <property type="molecule type" value="Genomic_DNA"/>
</dbReference>
<dbReference type="EMBL" id="CP002685">
    <property type="protein sequence ID" value="AEC08679.1"/>
    <property type="molecule type" value="Genomic_DNA"/>
</dbReference>
<dbReference type="PIR" id="F84732">
    <property type="entry name" value="F84732"/>
</dbReference>
<dbReference type="PIR" id="T51136">
    <property type="entry name" value="T51136"/>
</dbReference>
<dbReference type="RefSeq" id="NP_565744.1">
    <property type="nucleotide sequence ID" value="NM_128799.4"/>
</dbReference>
<dbReference type="SMR" id="Q9SDQ4"/>
<dbReference type="BioGRID" id="3148">
    <property type="interactions" value="2"/>
</dbReference>
<dbReference type="FunCoup" id="Q9SDQ4">
    <property type="interactions" value="247"/>
</dbReference>
<dbReference type="IntAct" id="Q9SDQ4">
    <property type="interactions" value="1"/>
</dbReference>
<dbReference type="STRING" id="3702.Q9SDQ4"/>
<dbReference type="GlyCosmos" id="Q9SDQ4">
    <property type="glycosylation" value="7 sites, No reported glycans"/>
</dbReference>
<dbReference type="GlyGen" id="Q9SDQ4">
    <property type="glycosylation" value="7 sites"/>
</dbReference>
<dbReference type="iPTMnet" id="Q9SDQ4"/>
<dbReference type="PaxDb" id="3702-AT2G32400.1"/>
<dbReference type="ProteomicsDB" id="230404"/>
<dbReference type="EnsemblPlants" id="AT2G32400.1">
    <property type="protein sequence ID" value="AT2G32400.1"/>
    <property type="gene ID" value="AT2G32400"/>
</dbReference>
<dbReference type="GeneID" id="817801"/>
<dbReference type="Gramene" id="AT2G32400.1">
    <property type="protein sequence ID" value="AT2G32400.1"/>
    <property type="gene ID" value="AT2G32400"/>
</dbReference>
<dbReference type="KEGG" id="ath:AT2G32400"/>
<dbReference type="Araport" id="AT2G32400"/>
<dbReference type="TAIR" id="AT2G32400">
    <property type="gene designation" value="GLR5"/>
</dbReference>
<dbReference type="eggNOG" id="KOG1052">
    <property type="taxonomic scope" value="Eukaryota"/>
</dbReference>
<dbReference type="HOGENOM" id="CLU_007358_0_1_1"/>
<dbReference type="InParanoid" id="Q9SDQ4"/>
<dbReference type="OMA" id="FMQCEIN"/>
<dbReference type="PhylomeDB" id="Q9SDQ4"/>
<dbReference type="PRO" id="PR:Q9SDQ4"/>
<dbReference type="Proteomes" id="UP000006548">
    <property type="component" value="Chromosome 2"/>
</dbReference>
<dbReference type="ExpressionAtlas" id="Q9SDQ4">
    <property type="expression patterns" value="baseline and differential"/>
</dbReference>
<dbReference type="GO" id="GO:0005886">
    <property type="term" value="C:plasma membrane"/>
    <property type="evidence" value="ECO:0000250"/>
    <property type="project" value="UniProtKB"/>
</dbReference>
<dbReference type="GO" id="GO:0009506">
    <property type="term" value="C:plasmodesma"/>
    <property type="evidence" value="ECO:0007005"/>
    <property type="project" value="TAIR"/>
</dbReference>
<dbReference type="GO" id="GO:0005262">
    <property type="term" value="F:calcium channel activity"/>
    <property type="evidence" value="ECO:0000250"/>
    <property type="project" value="UniProtKB"/>
</dbReference>
<dbReference type="GO" id="GO:0008066">
    <property type="term" value="F:glutamate receptor activity"/>
    <property type="evidence" value="ECO:0000250"/>
    <property type="project" value="UniProtKB"/>
</dbReference>
<dbReference type="GO" id="GO:0015276">
    <property type="term" value="F:ligand-gated monoatomic ion channel activity"/>
    <property type="evidence" value="ECO:0007669"/>
    <property type="project" value="InterPro"/>
</dbReference>
<dbReference type="GO" id="GO:0006816">
    <property type="term" value="P:calcium ion transport"/>
    <property type="evidence" value="ECO:0000250"/>
    <property type="project" value="UniProtKB"/>
</dbReference>
<dbReference type="GO" id="GO:0019722">
    <property type="term" value="P:calcium-mediated signaling"/>
    <property type="evidence" value="ECO:0000250"/>
    <property type="project" value="UniProtKB"/>
</dbReference>
<dbReference type="GO" id="GO:0071230">
    <property type="term" value="P:cellular response to amino acid stimulus"/>
    <property type="evidence" value="ECO:0000250"/>
    <property type="project" value="UniProtKB"/>
</dbReference>
<dbReference type="CDD" id="cd13686">
    <property type="entry name" value="GluR_Plant"/>
    <property type="match status" value="1"/>
</dbReference>
<dbReference type="CDD" id="cd19990">
    <property type="entry name" value="PBP1_GABAb_receptor_plant"/>
    <property type="match status" value="1"/>
</dbReference>
<dbReference type="FunFam" id="1.10.287.70:FF:000037">
    <property type="entry name" value="Glutamate receptor"/>
    <property type="match status" value="1"/>
</dbReference>
<dbReference type="FunFam" id="3.40.190.10:FF:000054">
    <property type="entry name" value="Glutamate receptor"/>
    <property type="match status" value="1"/>
</dbReference>
<dbReference type="FunFam" id="3.40.190.10:FF:000175">
    <property type="entry name" value="Glutamate receptor"/>
    <property type="match status" value="1"/>
</dbReference>
<dbReference type="FunFam" id="3.40.50.2300:FF:000081">
    <property type="entry name" value="Glutamate receptor"/>
    <property type="match status" value="1"/>
</dbReference>
<dbReference type="Gene3D" id="1.10.287.70">
    <property type="match status" value="1"/>
</dbReference>
<dbReference type="Gene3D" id="3.40.50.2300">
    <property type="match status" value="2"/>
</dbReference>
<dbReference type="Gene3D" id="3.40.190.10">
    <property type="entry name" value="Periplasmic binding protein-like II"/>
    <property type="match status" value="2"/>
</dbReference>
<dbReference type="InterPro" id="IPR001828">
    <property type="entry name" value="ANF_lig-bd_rcpt"/>
</dbReference>
<dbReference type="InterPro" id="IPR044440">
    <property type="entry name" value="GABAb_receptor_plant_PBP1"/>
</dbReference>
<dbReference type="InterPro" id="IPR015683">
    <property type="entry name" value="Ionotropic_Glu_rcpt"/>
</dbReference>
<dbReference type="InterPro" id="IPR001320">
    <property type="entry name" value="Iontro_rcpt_C"/>
</dbReference>
<dbReference type="InterPro" id="IPR017103">
    <property type="entry name" value="Iontropic_Glu_rcpt_pln"/>
</dbReference>
<dbReference type="InterPro" id="IPR028082">
    <property type="entry name" value="Peripla_BP_I"/>
</dbReference>
<dbReference type="InterPro" id="IPR001638">
    <property type="entry name" value="Solute-binding_3/MltF_N"/>
</dbReference>
<dbReference type="PANTHER" id="PTHR18966">
    <property type="entry name" value="IONOTROPIC GLUTAMATE RECEPTOR"/>
    <property type="match status" value="1"/>
</dbReference>
<dbReference type="Pfam" id="PF01094">
    <property type="entry name" value="ANF_receptor"/>
    <property type="match status" value="1"/>
</dbReference>
<dbReference type="Pfam" id="PF00060">
    <property type="entry name" value="Lig_chan"/>
    <property type="match status" value="1"/>
</dbReference>
<dbReference type="Pfam" id="PF00497">
    <property type="entry name" value="SBP_bac_3"/>
    <property type="match status" value="1"/>
</dbReference>
<dbReference type="PIRSF" id="PIRSF037090">
    <property type="entry name" value="Iontro_Glu-like_rcpt_pln"/>
    <property type="match status" value="1"/>
</dbReference>
<dbReference type="PRINTS" id="PR01176">
    <property type="entry name" value="GABABRECEPTR"/>
</dbReference>
<dbReference type="SMART" id="SM00079">
    <property type="entry name" value="PBPe"/>
    <property type="match status" value="1"/>
</dbReference>
<dbReference type="SUPFAM" id="SSF53822">
    <property type="entry name" value="Periplasmic binding protein-like I"/>
    <property type="match status" value="1"/>
</dbReference>
<dbReference type="SUPFAM" id="SSF53850">
    <property type="entry name" value="Periplasmic binding protein-like II"/>
    <property type="match status" value="1"/>
</dbReference>
<protein>
    <recommendedName>
        <fullName>Glutamate receptor 3.7</fullName>
    </recommendedName>
    <alternativeName>
        <fullName>Ionotropic glutamate receptor GLR5</fullName>
    </alternativeName>
    <alternativeName>
        <fullName>Ligand-gated ion channel 3.7</fullName>
    </alternativeName>
</protein>
<organism>
    <name type="scientific">Arabidopsis thaliana</name>
    <name type="common">Mouse-ear cress</name>
    <dbReference type="NCBI Taxonomy" id="3702"/>
    <lineage>
        <taxon>Eukaryota</taxon>
        <taxon>Viridiplantae</taxon>
        <taxon>Streptophyta</taxon>
        <taxon>Embryophyta</taxon>
        <taxon>Tracheophyta</taxon>
        <taxon>Spermatophyta</taxon>
        <taxon>Magnoliopsida</taxon>
        <taxon>eudicotyledons</taxon>
        <taxon>Gunneridae</taxon>
        <taxon>Pentapetalae</taxon>
        <taxon>rosids</taxon>
        <taxon>malvids</taxon>
        <taxon>Brassicales</taxon>
        <taxon>Brassicaceae</taxon>
        <taxon>Camelineae</taxon>
        <taxon>Arabidopsis</taxon>
    </lineage>
</organism>
<reference key="1">
    <citation type="journal article" date="2001" name="Science">
        <title>The identity of plant glutamate receptors.</title>
        <authorList>
            <person name="Lacombe B."/>
            <person name="Becker D."/>
            <person name="Hedrich R."/>
            <person name="DeSalle R."/>
            <person name="Hollmann M."/>
            <person name="Kwak J.M."/>
            <person name="Schroeder J.I."/>
            <person name="Le Novere N."/>
            <person name="Nam H.G."/>
            <person name="Spalding E.P."/>
            <person name="Tester M."/>
            <person name="Turano F.J."/>
            <person name="Chiu J."/>
            <person name="Coruzzi G."/>
        </authorList>
    </citation>
    <scope>NUCLEOTIDE SEQUENCE [MRNA]</scope>
    <scope>GENE FAMILY</scope>
    <scope>NOMENCLATURE</scope>
    <source>
        <strain>cv. Columbia</strain>
        <tissue>Seedling</tissue>
    </source>
</reference>
<reference key="2">
    <citation type="journal article" date="1999" name="Nature">
        <title>Sequence and analysis of chromosome 2 of the plant Arabidopsis thaliana.</title>
        <authorList>
            <person name="Lin X."/>
            <person name="Kaul S."/>
            <person name="Rounsley S.D."/>
            <person name="Shea T.P."/>
            <person name="Benito M.-I."/>
            <person name="Town C.D."/>
            <person name="Fujii C.Y."/>
            <person name="Mason T.M."/>
            <person name="Bowman C.L."/>
            <person name="Barnstead M.E."/>
            <person name="Feldblyum T.V."/>
            <person name="Buell C.R."/>
            <person name="Ketchum K.A."/>
            <person name="Lee J.J."/>
            <person name="Ronning C.M."/>
            <person name="Koo H.L."/>
            <person name="Moffat K.S."/>
            <person name="Cronin L.A."/>
            <person name="Shen M."/>
            <person name="Pai G."/>
            <person name="Van Aken S."/>
            <person name="Umayam L."/>
            <person name="Tallon L.J."/>
            <person name="Gill J.E."/>
            <person name="Adams M.D."/>
            <person name="Carrera A.J."/>
            <person name="Creasy T.H."/>
            <person name="Goodman H.M."/>
            <person name="Somerville C.R."/>
            <person name="Copenhaver G.P."/>
            <person name="Preuss D."/>
            <person name="Nierman W.C."/>
            <person name="White O."/>
            <person name="Eisen J.A."/>
            <person name="Salzberg S.L."/>
            <person name="Fraser C.M."/>
            <person name="Venter J.C."/>
        </authorList>
    </citation>
    <scope>NUCLEOTIDE SEQUENCE [LARGE SCALE GENOMIC DNA]</scope>
    <source>
        <strain>cv. Columbia</strain>
    </source>
</reference>
<reference key="3">
    <citation type="journal article" date="2017" name="Plant J.">
        <title>Araport11: a complete reannotation of the Arabidopsis thaliana reference genome.</title>
        <authorList>
            <person name="Cheng C.Y."/>
            <person name="Krishnakumar V."/>
            <person name="Chan A.P."/>
            <person name="Thibaud-Nissen F."/>
            <person name="Schobel S."/>
            <person name="Town C.D."/>
        </authorList>
    </citation>
    <scope>GENOME REANNOTATION</scope>
    <source>
        <strain>cv. Columbia</strain>
    </source>
</reference>
<reference key="4">
    <citation type="journal article" date="2002" name="Mol. Biol. Evol.">
        <title>Phylogenetic and expression analysis of the glutamate-receptor-like gene family in Arabidopsis thaliana.</title>
        <authorList>
            <person name="Chiu J.C."/>
            <person name="Brenner E.D."/>
            <person name="DeSalle R."/>
            <person name="Nitabach M.N."/>
            <person name="Holmes T.C."/>
            <person name="Coruzzi G.M."/>
        </authorList>
    </citation>
    <scope>TISSUE SPECIFICITY</scope>
</reference>
<proteinExistence type="evidence at transcript level"/>
<keyword id="KW-0325">Glycoprotein</keyword>
<keyword id="KW-0407">Ion channel</keyword>
<keyword id="KW-0406">Ion transport</keyword>
<keyword id="KW-1071">Ligand-gated ion channel</keyword>
<keyword id="KW-0472">Membrane</keyword>
<keyword id="KW-0675">Receptor</keyword>
<keyword id="KW-1185">Reference proteome</keyword>
<keyword id="KW-0732">Signal</keyword>
<keyword id="KW-0812">Transmembrane</keyword>
<keyword id="KW-1133">Transmembrane helix</keyword>
<keyword id="KW-0813">Transport</keyword>
<evidence type="ECO:0000250" key="1"/>
<evidence type="ECO:0000255" key="2"/>
<evidence type="ECO:0000256" key="3">
    <source>
        <dbReference type="SAM" id="MobiDB-lite"/>
    </source>
</evidence>
<evidence type="ECO:0000269" key="4">
    <source>
    </source>
</evidence>
<evidence type="ECO:0000305" key="5"/>
<sequence>MGLGIDPSVAITALIVVILVVPMDCQRPQLVNIGAVFAFDSVIGRAAKVALEAAVSDVNNDKSFLKETELRLLMEDSACNVFRGSFGAFELLEKEVVAMIGPISSSVAHTISDIAKGLHFPLVSFAATDPTLSALQFPFFLRTTPNDAHQMSALVDLINFYGWKEVISVYSDDELGRNGVSALDDELYKKRSRISYKVPLSVHSDEKFLTNALNKSKSIGPRVYILHFGPDPLLRIFDIAQKLQMMTHEYVWLATDWLSVTLDSLSDKGTLKRLEGVVGLRQHIPESVKMEHFTHKLQSNRSMNAYALHAYDTVWMIAHGIEELLNEGINITFSYSEKLLHARGTKLHLEKIKFFNSGELLLEKLLKVNFTGIAGQVQFGSGRNVIGCDYEIINVNKTDVHTVGFWSKNGGFSVVAPKTRHSQKKTSFVSDEKLGDITWPGGGREKPRGWVIADSADPLKIVVPRRVSFVEFVTEEKNSSHRIQGFCIDVFIEALKFVPYSVPYIFEPFGNGHSSPNYNHLIQMVTDGVYDAAVGDIAIVPSRSKLVDFSQPYASTGLVVVIPANDDNATWIFLRPFTSRLWCVVLVSFLVIAVVIWILEHRINEDFRGPPRRQLSTMLLFSFSTLFKRNQEDTISNLARLVMIVWLFLLMVLTASYTANLTSILTVQQLPSAITGIDSLRASEVPIGYQAGTFTLEYLTYSLGMARSRLVPLDSTEEYEKALKLGPTNWGGVAAIVDELPYIELFLAERTGFKIVGEPFMHRGWGFAFKRDSPLAIDMSTAILKLSETRKLQEIRKKWLCKTNCAGKSNWNPEPNQLHLKSFKGLYLVCIAITVSAFLVFVLRMIRQFVRYRRMERTSSMPRASWSASPTLRLRELVFDFVEFVDEKEEAIKRMFRRSDDSNNNPSHVGEVQADTEVPRN</sequence>
<gene>
    <name type="primary">GLR3.7</name>
    <name type="synonym">GLR5</name>
    <name type="ordered locus">At2g32400</name>
    <name type="ORF">T32F6.8</name>
</gene>
<accession>Q9SDQ4</accession>
<accession>Q9ZV68</accession>
<comment type="function">
    <text>Glutamate-gated receptor that probably acts as a non-selective cation channel. May be involved in light-signal transduction and calcium homeostasis via the regulation of calcium influx into cells.</text>
</comment>
<comment type="subunit">
    <text evidence="1">May form heteromers.</text>
</comment>
<comment type="subcellular location">
    <subcellularLocation>
        <location>Membrane</location>
        <topology>Multi-pass membrane protein</topology>
    </subcellularLocation>
</comment>
<comment type="tissue specificity">
    <text evidence="4">Expressed predominantly in leaves and siliques. Also detected in roots.</text>
</comment>
<comment type="similarity">
    <text evidence="5">Belongs to the glutamate-gated ion channel (TC 1.A.10.1) family.</text>
</comment>
<name>GLR37_ARATH</name>